<protein>
    <recommendedName>
        <fullName evidence="1">Large ribosomal subunit protein uL6</fullName>
    </recommendedName>
    <alternativeName>
        <fullName evidence="2">50S ribosomal protein L6</fullName>
    </alternativeName>
</protein>
<evidence type="ECO:0000255" key="1">
    <source>
        <dbReference type="HAMAP-Rule" id="MF_01365"/>
    </source>
</evidence>
<evidence type="ECO:0000305" key="2"/>
<organism>
    <name type="scientific">Cereibacter sphaeroides (strain ATCC 17029 / ATH 2.4.9)</name>
    <name type="common">Rhodobacter sphaeroides</name>
    <dbReference type="NCBI Taxonomy" id="349101"/>
    <lineage>
        <taxon>Bacteria</taxon>
        <taxon>Pseudomonadati</taxon>
        <taxon>Pseudomonadota</taxon>
        <taxon>Alphaproteobacteria</taxon>
        <taxon>Rhodobacterales</taxon>
        <taxon>Paracoccaceae</taxon>
        <taxon>Cereibacter</taxon>
    </lineage>
</organism>
<accession>A3PGM6</accession>
<proteinExistence type="inferred from homology"/>
<reference key="1">
    <citation type="submission" date="2007-02" db="EMBL/GenBank/DDBJ databases">
        <title>Complete sequence of chromosome 1 of Rhodobacter sphaeroides ATCC 17029.</title>
        <authorList>
            <person name="Copeland A."/>
            <person name="Lucas S."/>
            <person name="Lapidus A."/>
            <person name="Barry K."/>
            <person name="Detter J.C."/>
            <person name="Glavina del Rio T."/>
            <person name="Hammon N."/>
            <person name="Israni S."/>
            <person name="Dalin E."/>
            <person name="Tice H."/>
            <person name="Pitluck S."/>
            <person name="Kiss H."/>
            <person name="Brettin T."/>
            <person name="Bruce D."/>
            <person name="Han C."/>
            <person name="Tapia R."/>
            <person name="Gilna P."/>
            <person name="Schmutz J."/>
            <person name="Larimer F."/>
            <person name="Land M."/>
            <person name="Hauser L."/>
            <person name="Kyrpides N."/>
            <person name="Mikhailova N."/>
            <person name="Richardson P."/>
            <person name="Mackenzie C."/>
            <person name="Choudhary M."/>
            <person name="Donohue T.J."/>
            <person name="Kaplan S."/>
        </authorList>
    </citation>
    <scope>NUCLEOTIDE SEQUENCE [LARGE SCALE GENOMIC DNA]</scope>
    <source>
        <strain>ATCC 17029 / ATH 2.4.9</strain>
    </source>
</reference>
<comment type="function">
    <text evidence="1">This protein binds to the 23S rRNA, and is important in its secondary structure. It is located near the subunit interface in the base of the L7/L12 stalk, and near the tRNA binding site of the peptidyltransferase center.</text>
</comment>
<comment type="subunit">
    <text evidence="1">Part of the 50S ribosomal subunit.</text>
</comment>
<comment type="similarity">
    <text evidence="1">Belongs to the universal ribosomal protein uL6 family.</text>
</comment>
<gene>
    <name evidence="1" type="primary">rplF</name>
    <name type="ordered locus">Rsph17029_0376</name>
</gene>
<name>RL6_CERS1</name>
<keyword id="KW-0687">Ribonucleoprotein</keyword>
<keyword id="KW-0689">Ribosomal protein</keyword>
<keyword id="KW-0694">RNA-binding</keyword>
<keyword id="KW-0699">rRNA-binding</keyword>
<sequence length="177" mass="19362">MSRIGKKPVPLPKGVTASISGQSIEVKGPKGTRSFSATDDVTLALDEGSVKVTPRGTSKRARQQWGMVRSQVENLVTGVTSGFKKELEISGVGYRAQMAGNVLKLSLGYSHDVNFEVPAGVTVTTPKQTEITVEGIDQQLVGQVAANIREWRRPEPYKGKGIRYKDEFIFRKEGKKK</sequence>
<dbReference type="EMBL" id="CP000577">
    <property type="protein sequence ID" value="ABN75492.1"/>
    <property type="molecule type" value="Genomic_DNA"/>
</dbReference>
<dbReference type="RefSeq" id="WP_002722518.1">
    <property type="nucleotide sequence ID" value="NC_009049.1"/>
</dbReference>
<dbReference type="SMR" id="A3PGM6"/>
<dbReference type="GeneID" id="67445515"/>
<dbReference type="KEGG" id="rsh:Rsph17029_0376"/>
<dbReference type="HOGENOM" id="CLU_065464_1_2_5"/>
<dbReference type="GO" id="GO:0022625">
    <property type="term" value="C:cytosolic large ribosomal subunit"/>
    <property type="evidence" value="ECO:0007669"/>
    <property type="project" value="TreeGrafter"/>
</dbReference>
<dbReference type="GO" id="GO:0019843">
    <property type="term" value="F:rRNA binding"/>
    <property type="evidence" value="ECO:0007669"/>
    <property type="project" value="UniProtKB-UniRule"/>
</dbReference>
<dbReference type="GO" id="GO:0003735">
    <property type="term" value="F:structural constituent of ribosome"/>
    <property type="evidence" value="ECO:0007669"/>
    <property type="project" value="InterPro"/>
</dbReference>
<dbReference type="GO" id="GO:0002181">
    <property type="term" value="P:cytoplasmic translation"/>
    <property type="evidence" value="ECO:0007669"/>
    <property type="project" value="TreeGrafter"/>
</dbReference>
<dbReference type="FunFam" id="3.90.930.12:FF:000001">
    <property type="entry name" value="50S ribosomal protein L6"/>
    <property type="match status" value="1"/>
</dbReference>
<dbReference type="Gene3D" id="3.90.930.12">
    <property type="entry name" value="Ribosomal protein L6, alpha-beta domain"/>
    <property type="match status" value="2"/>
</dbReference>
<dbReference type="HAMAP" id="MF_01365_B">
    <property type="entry name" value="Ribosomal_uL6_B"/>
    <property type="match status" value="1"/>
</dbReference>
<dbReference type="InterPro" id="IPR000702">
    <property type="entry name" value="Ribosomal_uL6-like"/>
</dbReference>
<dbReference type="InterPro" id="IPR036789">
    <property type="entry name" value="Ribosomal_uL6-like_a/b-dom_sf"/>
</dbReference>
<dbReference type="InterPro" id="IPR020040">
    <property type="entry name" value="Ribosomal_uL6_a/b-dom"/>
</dbReference>
<dbReference type="InterPro" id="IPR019906">
    <property type="entry name" value="Ribosomal_uL6_bac-type"/>
</dbReference>
<dbReference type="InterPro" id="IPR002358">
    <property type="entry name" value="Ribosomal_uL6_CS"/>
</dbReference>
<dbReference type="NCBIfam" id="TIGR03654">
    <property type="entry name" value="L6_bact"/>
    <property type="match status" value="1"/>
</dbReference>
<dbReference type="PANTHER" id="PTHR11655">
    <property type="entry name" value="60S/50S RIBOSOMAL PROTEIN L6/L9"/>
    <property type="match status" value="1"/>
</dbReference>
<dbReference type="PANTHER" id="PTHR11655:SF14">
    <property type="entry name" value="LARGE RIBOSOMAL SUBUNIT PROTEIN UL6M"/>
    <property type="match status" value="1"/>
</dbReference>
<dbReference type="Pfam" id="PF00347">
    <property type="entry name" value="Ribosomal_L6"/>
    <property type="match status" value="2"/>
</dbReference>
<dbReference type="PIRSF" id="PIRSF002162">
    <property type="entry name" value="Ribosomal_L6"/>
    <property type="match status" value="1"/>
</dbReference>
<dbReference type="PRINTS" id="PR00059">
    <property type="entry name" value="RIBOSOMALL6"/>
</dbReference>
<dbReference type="SUPFAM" id="SSF56053">
    <property type="entry name" value="Ribosomal protein L6"/>
    <property type="match status" value="2"/>
</dbReference>
<dbReference type="PROSITE" id="PS00525">
    <property type="entry name" value="RIBOSOMAL_L6_1"/>
    <property type="match status" value="1"/>
</dbReference>
<feature type="chain" id="PRO_1000055294" description="Large ribosomal subunit protein uL6">
    <location>
        <begin position="1"/>
        <end position="177"/>
    </location>
</feature>